<name>PSAJ_TOBAC</name>
<dbReference type="EMBL" id="Z00044">
    <property type="protein sequence ID" value="CAA77421.1"/>
    <property type="molecule type" value="Genomic_DNA"/>
</dbReference>
<dbReference type="RefSeq" id="NP_054521.1">
    <property type="nucleotide sequence ID" value="NC_001879.2"/>
</dbReference>
<dbReference type="SMR" id="P12193"/>
<dbReference type="GeneID" id="800526"/>
<dbReference type="KEGG" id="nta:800526"/>
<dbReference type="OrthoDB" id="1844838at2759"/>
<dbReference type="Proteomes" id="UP000084051">
    <property type="component" value="Unplaced"/>
</dbReference>
<dbReference type="GO" id="GO:0009535">
    <property type="term" value="C:chloroplast thylakoid membrane"/>
    <property type="evidence" value="ECO:0007669"/>
    <property type="project" value="UniProtKB-SubCell"/>
</dbReference>
<dbReference type="GO" id="GO:0009522">
    <property type="term" value="C:photosystem I"/>
    <property type="evidence" value="ECO:0007669"/>
    <property type="project" value="UniProtKB-KW"/>
</dbReference>
<dbReference type="GO" id="GO:0015979">
    <property type="term" value="P:photosynthesis"/>
    <property type="evidence" value="ECO:0007669"/>
    <property type="project" value="UniProtKB-UniRule"/>
</dbReference>
<dbReference type="FunFam" id="1.20.5.510:FF:000001">
    <property type="entry name" value="Photosystem I reaction center subunit IX"/>
    <property type="match status" value="1"/>
</dbReference>
<dbReference type="Gene3D" id="1.20.5.510">
    <property type="entry name" value="Single helix bin"/>
    <property type="match status" value="1"/>
</dbReference>
<dbReference type="HAMAP" id="MF_00522">
    <property type="entry name" value="PSI_PsaJ"/>
    <property type="match status" value="1"/>
</dbReference>
<dbReference type="InterPro" id="IPR002615">
    <property type="entry name" value="PSI_PsaJ"/>
</dbReference>
<dbReference type="InterPro" id="IPR036062">
    <property type="entry name" value="PSI_PsaJ_sf"/>
</dbReference>
<dbReference type="PANTHER" id="PTHR36082">
    <property type="match status" value="1"/>
</dbReference>
<dbReference type="PANTHER" id="PTHR36082:SF2">
    <property type="entry name" value="PHOTOSYSTEM I REACTION CENTER SUBUNIT IX"/>
    <property type="match status" value="1"/>
</dbReference>
<dbReference type="Pfam" id="PF01701">
    <property type="entry name" value="PSI_PsaJ"/>
    <property type="match status" value="1"/>
</dbReference>
<dbReference type="SUPFAM" id="SSF81544">
    <property type="entry name" value="Subunit IX of photosystem I reaction centre, PsaJ"/>
    <property type="match status" value="1"/>
</dbReference>
<feature type="chain" id="PRO_0000207817" description="Photosystem I reaction center subunit IX">
    <location>
        <begin position="1"/>
        <end position="44"/>
    </location>
</feature>
<feature type="transmembrane region" description="Helical" evidence="1">
    <location>
        <begin position="7"/>
        <end position="27"/>
    </location>
</feature>
<reference key="1">
    <citation type="journal article" date="1986" name="EMBO J.">
        <title>The complete nucleotide sequence of the tobacco chloroplast genome: its gene organization and expression.</title>
        <authorList>
            <person name="Shinozaki K."/>
            <person name="Ohme M."/>
            <person name="Tanaka M."/>
            <person name="Wakasugi T."/>
            <person name="Hayashida N."/>
            <person name="Matsubayashi T."/>
            <person name="Zaita N."/>
            <person name="Chunwongse J."/>
            <person name="Obokata J."/>
            <person name="Yamaguchi-Shinozaki K."/>
            <person name="Ohto C."/>
            <person name="Torazawa K."/>
            <person name="Meng B.-Y."/>
            <person name="Sugita M."/>
            <person name="Deno H."/>
            <person name="Kamogashira T."/>
            <person name="Yamada K."/>
            <person name="Kusuda J."/>
            <person name="Takaiwa F."/>
            <person name="Kato A."/>
            <person name="Tohdoh N."/>
            <person name="Shimada H."/>
            <person name="Sugiura M."/>
        </authorList>
    </citation>
    <scope>NUCLEOTIDE SEQUENCE [LARGE SCALE GENOMIC DNA]</scope>
    <source>
        <strain>cv. Bright Yellow 4</strain>
    </source>
</reference>
<evidence type="ECO:0000255" key="1">
    <source>
        <dbReference type="HAMAP-Rule" id="MF_00522"/>
    </source>
</evidence>
<gene>
    <name evidence="1" type="primary">psaJ</name>
</gene>
<sequence>MRDLKTYLSVAPVLSTLWFGALAGLLIEINRFFPDALTFPFFSF</sequence>
<keyword id="KW-0150">Chloroplast</keyword>
<keyword id="KW-0472">Membrane</keyword>
<keyword id="KW-0602">Photosynthesis</keyword>
<keyword id="KW-0603">Photosystem I</keyword>
<keyword id="KW-0934">Plastid</keyword>
<keyword id="KW-1185">Reference proteome</keyword>
<keyword id="KW-0793">Thylakoid</keyword>
<keyword id="KW-0812">Transmembrane</keyword>
<keyword id="KW-1133">Transmembrane helix</keyword>
<organism>
    <name type="scientific">Nicotiana tabacum</name>
    <name type="common">Common tobacco</name>
    <dbReference type="NCBI Taxonomy" id="4097"/>
    <lineage>
        <taxon>Eukaryota</taxon>
        <taxon>Viridiplantae</taxon>
        <taxon>Streptophyta</taxon>
        <taxon>Embryophyta</taxon>
        <taxon>Tracheophyta</taxon>
        <taxon>Spermatophyta</taxon>
        <taxon>Magnoliopsida</taxon>
        <taxon>eudicotyledons</taxon>
        <taxon>Gunneridae</taxon>
        <taxon>Pentapetalae</taxon>
        <taxon>asterids</taxon>
        <taxon>lamiids</taxon>
        <taxon>Solanales</taxon>
        <taxon>Solanaceae</taxon>
        <taxon>Nicotianoideae</taxon>
        <taxon>Nicotianeae</taxon>
        <taxon>Nicotiana</taxon>
    </lineage>
</organism>
<accession>P12193</accession>
<geneLocation type="chloroplast"/>
<protein>
    <recommendedName>
        <fullName evidence="1">Photosystem I reaction center subunit IX</fullName>
    </recommendedName>
    <alternativeName>
        <fullName evidence="1">PSI-J</fullName>
    </alternativeName>
</protein>
<comment type="function">
    <text evidence="1">May help in the organization of the PsaE and PsaF subunits.</text>
</comment>
<comment type="subcellular location">
    <subcellularLocation>
        <location evidence="1">Plastid</location>
        <location evidence="1">Chloroplast thylakoid membrane</location>
        <topology evidence="1">Single-pass membrane protein</topology>
    </subcellularLocation>
</comment>
<comment type="similarity">
    <text evidence="1">Belongs to the PsaJ family.</text>
</comment>
<proteinExistence type="inferred from homology"/>